<protein>
    <recommendedName>
        <fullName evidence="1">D-aminoacyl-tRNA deacylase</fullName>
        <shortName evidence="1">DTD</shortName>
        <ecNumber evidence="1">3.1.1.96</ecNumber>
    </recommendedName>
    <alternativeName>
        <fullName evidence="1">Gly-tRNA(Ala) deacylase</fullName>
    </alternativeName>
</protein>
<accession>Q31UA6</accession>
<name>DTD_SHIBS</name>
<comment type="function">
    <text evidence="1">An aminoacyl-tRNA editing enzyme that deacylates mischarged D-aminoacyl-tRNAs. Also deacylates mischarged glycyl-tRNA(Ala), protecting cells against glycine mischarging by AlaRS. Acts via tRNA-based rather than protein-based catalysis; rejects L-amino acids rather than detecting D-amino acids in the active site. By recycling D-aminoacyl-tRNA to D-amino acids and free tRNA molecules, this enzyme counteracts the toxicity associated with the formation of D-aminoacyl-tRNA entities in vivo and helps enforce protein L-homochirality.</text>
</comment>
<comment type="catalytic activity">
    <reaction evidence="1">
        <text>glycyl-tRNA(Ala) + H2O = tRNA(Ala) + glycine + H(+)</text>
        <dbReference type="Rhea" id="RHEA:53744"/>
        <dbReference type="Rhea" id="RHEA-COMP:9657"/>
        <dbReference type="Rhea" id="RHEA-COMP:13640"/>
        <dbReference type="ChEBI" id="CHEBI:15377"/>
        <dbReference type="ChEBI" id="CHEBI:15378"/>
        <dbReference type="ChEBI" id="CHEBI:57305"/>
        <dbReference type="ChEBI" id="CHEBI:78442"/>
        <dbReference type="ChEBI" id="CHEBI:78522"/>
        <dbReference type="EC" id="3.1.1.96"/>
    </reaction>
</comment>
<comment type="catalytic activity">
    <reaction evidence="1">
        <text>a D-aminoacyl-tRNA + H2O = a tRNA + a D-alpha-amino acid + H(+)</text>
        <dbReference type="Rhea" id="RHEA:13953"/>
        <dbReference type="Rhea" id="RHEA-COMP:10123"/>
        <dbReference type="Rhea" id="RHEA-COMP:10124"/>
        <dbReference type="ChEBI" id="CHEBI:15377"/>
        <dbReference type="ChEBI" id="CHEBI:15378"/>
        <dbReference type="ChEBI" id="CHEBI:59871"/>
        <dbReference type="ChEBI" id="CHEBI:78442"/>
        <dbReference type="ChEBI" id="CHEBI:79333"/>
        <dbReference type="EC" id="3.1.1.96"/>
    </reaction>
</comment>
<comment type="subunit">
    <text evidence="1">Homodimer.</text>
</comment>
<comment type="subcellular location">
    <subcellularLocation>
        <location evidence="1">Cytoplasm</location>
    </subcellularLocation>
</comment>
<comment type="domain">
    <text evidence="1">A Gly-cisPro motif from one monomer fits into the active site of the other monomer to allow specific chiral rejection of L-amino acids.</text>
</comment>
<comment type="similarity">
    <text evidence="1">Belongs to the DTD family.</text>
</comment>
<dbReference type="EC" id="3.1.1.96" evidence="1"/>
<dbReference type="EMBL" id="CP000036">
    <property type="protein sequence ID" value="ABB68352.1"/>
    <property type="molecule type" value="Genomic_DNA"/>
</dbReference>
<dbReference type="RefSeq" id="WP_000560983.1">
    <property type="nucleotide sequence ID" value="NC_007613.1"/>
</dbReference>
<dbReference type="SMR" id="Q31UA6"/>
<dbReference type="GeneID" id="93778051"/>
<dbReference type="KEGG" id="sbo:SBO_3901"/>
<dbReference type="HOGENOM" id="CLU_076901_1_0_6"/>
<dbReference type="Proteomes" id="UP000007067">
    <property type="component" value="Chromosome"/>
</dbReference>
<dbReference type="GO" id="GO:0005737">
    <property type="term" value="C:cytoplasm"/>
    <property type="evidence" value="ECO:0007669"/>
    <property type="project" value="UniProtKB-SubCell"/>
</dbReference>
<dbReference type="GO" id="GO:0051500">
    <property type="term" value="F:D-tyrosyl-tRNA(Tyr) deacylase activity"/>
    <property type="evidence" value="ECO:0007669"/>
    <property type="project" value="TreeGrafter"/>
</dbReference>
<dbReference type="GO" id="GO:0106026">
    <property type="term" value="F:Gly-tRNA(Ala) deacylase activity"/>
    <property type="evidence" value="ECO:0007669"/>
    <property type="project" value="UniProtKB-UniRule"/>
</dbReference>
<dbReference type="GO" id="GO:0043908">
    <property type="term" value="F:Ser(Gly)-tRNA(Ala) hydrolase activity"/>
    <property type="evidence" value="ECO:0007669"/>
    <property type="project" value="UniProtKB-UniRule"/>
</dbReference>
<dbReference type="GO" id="GO:0000049">
    <property type="term" value="F:tRNA binding"/>
    <property type="evidence" value="ECO:0007669"/>
    <property type="project" value="UniProtKB-UniRule"/>
</dbReference>
<dbReference type="GO" id="GO:0019478">
    <property type="term" value="P:D-amino acid catabolic process"/>
    <property type="evidence" value="ECO:0007669"/>
    <property type="project" value="UniProtKB-UniRule"/>
</dbReference>
<dbReference type="CDD" id="cd00563">
    <property type="entry name" value="Dtyr_deacylase"/>
    <property type="match status" value="1"/>
</dbReference>
<dbReference type="FunFam" id="3.50.80.10:FF:000001">
    <property type="entry name" value="D-aminoacyl-tRNA deacylase"/>
    <property type="match status" value="1"/>
</dbReference>
<dbReference type="Gene3D" id="3.50.80.10">
    <property type="entry name" value="D-tyrosyl-tRNA(Tyr) deacylase"/>
    <property type="match status" value="1"/>
</dbReference>
<dbReference type="HAMAP" id="MF_00518">
    <property type="entry name" value="Deacylase_Dtd"/>
    <property type="match status" value="1"/>
</dbReference>
<dbReference type="InterPro" id="IPR003732">
    <property type="entry name" value="Daa-tRNA_deacyls_DTD"/>
</dbReference>
<dbReference type="InterPro" id="IPR023509">
    <property type="entry name" value="DTD-like_sf"/>
</dbReference>
<dbReference type="NCBIfam" id="TIGR00256">
    <property type="entry name" value="D-aminoacyl-tRNA deacylase"/>
    <property type="match status" value="1"/>
</dbReference>
<dbReference type="PANTHER" id="PTHR10472:SF5">
    <property type="entry name" value="D-AMINOACYL-TRNA DEACYLASE 1"/>
    <property type="match status" value="1"/>
</dbReference>
<dbReference type="PANTHER" id="PTHR10472">
    <property type="entry name" value="D-TYROSYL-TRNA TYR DEACYLASE"/>
    <property type="match status" value="1"/>
</dbReference>
<dbReference type="Pfam" id="PF02580">
    <property type="entry name" value="Tyr_Deacylase"/>
    <property type="match status" value="1"/>
</dbReference>
<dbReference type="SUPFAM" id="SSF69500">
    <property type="entry name" value="DTD-like"/>
    <property type="match status" value="1"/>
</dbReference>
<keyword id="KW-0963">Cytoplasm</keyword>
<keyword id="KW-0378">Hydrolase</keyword>
<keyword id="KW-0694">RNA-binding</keyword>
<keyword id="KW-0820">tRNA-binding</keyword>
<feature type="chain" id="PRO_0000259311" description="D-aminoacyl-tRNA deacylase">
    <location>
        <begin position="1"/>
        <end position="145"/>
    </location>
</feature>
<feature type="short sequence motif" description="Gly-cisPro motif, important for rejection of L-amino acids" evidence="1">
    <location>
        <begin position="137"/>
        <end position="138"/>
    </location>
</feature>
<organism>
    <name type="scientific">Shigella boydii serotype 4 (strain Sb227)</name>
    <dbReference type="NCBI Taxonomy" id="300268"/>
    <lineage>
        <taxon>Bacteria</taxon>
        <taxon>Pseudomonadati</taxon>
        <taxon>Pseudomonadota</taxon>
        <taxon>Gammaproteobacteria</taxon>
        <taxon>Enterobacterales</taxon>
        <taxon>Enterobacteriaceae</taxon>
        <taxon>Shigella</taxon>
    </lineage>
</organism>
<reference key="1">
    <citation type="journal article" date="2005" name="Nucleic Acids Res.">
        <title>Genome dynamics and diversity of Shigella species, the etiologic agents of bacillary dysentery.</title>
        <authorList>
            <person name="Yang F."/>
            <person name="Yang J."/>
            <person name="Zhang X."/>
            <person name="Chen L."/>
            <person name="Jiang Y."/>
            <person name="Yan Y."/>
            <person name="Tang X."/>
            <person name="Wang J."/>
            <person name="Xiong Z."/>
            <person name="Dong J."/>
            <person name="Xue Y."/>
            <person name="Zhu Y."/>
            <person name="Xu X."/>
            <person name="Sun L."/>
            <person name="Chen S."/>
            <person name="Nie H."/>
            <person name="Peng J."/>
            <person name="Xu J."/>
            <person name="Wang Y."/>
            <person name="Yuan Z."/>
            <person name="Wen Y."/>
            <person name="Yao Z."/>
            <person name="Shen Y."/>
            <person name="Qiang B."/>
            <person name="Hou Y."/>
            <person name="Yu J."/>
            <person name="Jin Q."/>
        </authorList>
    </citation>
    <scope>NUCLEOTIDE SEQUENCE [LARGE SCALE GENOMIC DNA]</scope>
    <source>
        <strain>Sb227</strain>
    </source>
</reference>
<gene>
    <name evidence="1" type="primary">dtd</name>
    <name type="ordered locus">SBO_3901</name>
</gene>
<evidence type="ECO:0000255" key="1">
    <source>
        <dbReference type="HAMAP-Rule" id="MF_00518"/>
    </source>
</evidence>
<proteinExistence type="inferred from homology"/>
<sequence length="145" mass="15950">MIALIQRVTRASVTVEGEVTGEIGAGLLVLLGVEKDDDEQKANRLCERVLGYRIFSDAEGKMNLNVQQAGGSVLVVSQFTLAADTERGMRPSFSKGASPDRAEALYDYFVERCRQQEMNTQTGRFAADMQVSLVNDGPVTFWLQV</sequence>